<organism>
    <name type="scientific">Coxiella burnetii (strain CbuG_Q212)</name>
    <name type="common">Coxiella burnetii (strain Q212)</name>
    <dbReference type="NCBI Taxonomy" id="434923"/>
    <lineage>
        <taxon>Bacteria</taxon>
        <taxon>Pseudomonadati</taxon>
        <taxon>Pseudomonadota</taxon>
        <taxon>Gammaproteobacteria</taxon>
        <taxon>Legionellales</taxon>
        <taxon>Coxiellaceae</taxon>
        <taxon>Coxiella</taxon>
    </lineage>
</organism>
<reference key="1">
    <citation type="journal article" date="2009" name="Infect. Immun.">
        <title>Comparative genomics reveal extensive transposon-mediated genomic plasticity and diversity among potential effector proteins within the genus Coxiella.</title>
        <authorList>
            <person name="Beare P.A."/>
            <person name="Unsworth N."/>
            <person name="Andoh M."/>
            <person name="Voth D.E."/>
            <person name="Omsland A."/>
            <person name="Gilk S.D."/>
            <person name="Williams K.P."/>
            <person name="Sobral B.W."/>
            <person name="Kupko J.J. III"/>
            <person name="Porcella S.F."/>
            <person name="Samuel J.E."/>
            <person name="Heinzen R.A."/>
        </authorList>
    </citation>
    <scope>NUCLEOTIDE SEQUENCE [LARGE SCALE GENOMIC DNA]</scope>
    <source>
        <strain>CbuG_Q212</strain>
    </source>
</reference>
<name>AROD_COXB2</name>
<feature type="chain" id="PRO_1000099903" description="3-dehydroquinate dehydratase">
    <location>
        <begin position="1"/>
        <end position="233"/>
    </location>
</feature>
<feature type="active site" description="Proton donor/acceptor" evidence="1">
    <location>
        <position position="118"/>
    </location>
</feature>
<feature type="active site" description="Schiff-base intermediate with substrate" evidence="1">
    <location>
        <position position="145"/>
    </location>
</feature>
<feature type="binding site" evidence="1">
    <location>
        <begin position="34"/>
        <end position="36"/>
    </location>
    <ligand>
        <name>3-dehydroquinate</name>
        <dbReference type="ChEBI" id="CHEBI:32364"/>
    </ligand>
</feature>
<feature type="binding site" evidence="1">
    <location>
        <position position="64"/>
    </location>
    <ligand>
        <name>3-dehydroquinate</name>
        <dbReference type="ChEBI" id="CHEBI:32364"/>
    </ligand>
</feature>
<feature type="binding site" evidence="1">
    <location>
        <position position="185"/>
    </location>
    <ligand>
        <name>3-dehydroquinate</name>
        <dbReference type="ChEBI" id="CHEBI:32364"/>
    </ligand>
</feature>
<feature type="binding site" evidence="1">
    <location>
        <position position="205"/>
    </location>
    <ligand>
        <name>3-dehydroquinate</name>
        <dbReference type="ChEBI" id="CHEBI:32364"/>
    </ligand>
</feature>
<feature type="binding site" evidence="1">
    <location>
        <position position="209"/>
    </location>
    <ligand>
        <name>3-dehydroquinate</name>
        <dbReference type="ChEBI" id="CHEBI:32364"/>
    </ligand>
</feature>
<dbReference type="EC" id="4.2.1.10" evidence="1"/>
<dbReference type="EMBL" id="CP001019">
    <property type="protein sequence ID" value="ACJ19309.1"/>
    <property type="molecule type" value="Genomic_DNA"/>
</dbReference>
<dbReference type="RefSeq" id="WP_005772174.1">
    <property type="nucleotide sequence ID" value="NC_011527.1"/>
</dbReference>
<dbReference type="SMR" id="B6J3T7"/>
<dbReference type="KEGG" id="cbg:CbuG_2076"/>
<dbReference type="HOGENOM" id="CLU_064444_2_1_6"/>
<dbReference type="UniPathway" id="UPA00053">
    <property type="reaction ID" value="UER00086"/>
</dbReference>
<dbReference type="GO" id="GO:0003855">
    <property type="term" value="F:3-dehydroquinate dehydratase activity"/>
    <property type="evidence" value="ECO:0007669"/>
    <property type="project" value="UniProtKB-UniRule"/>
</dbReference>
<dbReference type="GO" id="GO:0046279">
    <property type="term" value="P:3,4-dihydroxybenzoate biosynthetic process"/>
    <property type="evidence" value="ECO:0007669"/>
    <property type="project" value="TreeGrafter"/>
</dbReference>
<dbReference type="GO" id="GO:0008652">
    <property type="term" value="P:amino acid biosynthetic process"/>
    <property type="evidence" value="ECO:0007669"/>
    <property type="project" value="UniProtKB-KW"/>
</dbReference>
<dbReference type="GO" id="GO:0009073">
    <property type="term" value="P:aromatic amino acid family biosynthetic process"/>
    <property type="evidence" value="ECO:0007669"/>
    <property type="project" value="UniProtKB-KW"/>
</dbReference>
<dbReference type="GO" id="GO:0009423">
    <property type="term" value="P:chorismate biosynthetic process"/>
    <property type="evidence" value="ECO:0007669"/>
    <property type="project" value="UniProtKB-UniRule"/>
</dbReference>
<dbReference type="CDD" id="cd00502">
    <property type="entry name" value="DHQase_I"/>
    <property type="match status" value="1"/>
</dbReference>
<dbReference type="FunFam" id="3.20.20.70:FF:000290">
    <property type="entry name" value="3-dehydroquinate dehydratase"/>
    <property type="match status" value="1"/>
</dbReference>
<dbReference type="Gene3D" id="3.20.20.70">
    <property type="entry name" value="Aldolase class I"/>
    <property type="match status" value="1"/>
</dbReference>
<dbReference type="HAMAP" id="MF_00214">
    <property type="entry name" value="AroD"/>
    <property type="match status" value="1"/>
</dbReference>
<dbReference type="InterPro" id="IPR013785">
    <property type="entry name" value="Aldolase_TIM"/>
</dbReference>
<dbReference type="InterPro" id="IPR001381">
    <property type="entry name" value="DHquinase_I"/>
</dbReference>
<dbReference type="InterPro" id="IPR050146">
    <property type="entry name" value="Type-I_3-dehydroquinase"/>
</dbReference>
<dbReference type="NCBIfam" id="TIGR01093">
    <property type="entry name" value="aroD"/>
    <property type="match status" value="1"/>
</dbReference>
<dbReference type="PANTHER" id="PTHR43699">
    <property type="entry name" value="3-DEHYDROQUINATE DEHYDRATASE"/>
    <property type="match status" value="1"/>
</dbReference>
<dbReference type="PANTHER" id="PTHR43699:SF1">
    <property type="entry name" value="3-DEHYDROQUINATE DEHYDRATASE"/>
    <property type="match status" value="1"/>
</dbReference>
<dbReference type="Pfam" id="PF01487">
    <property type="entry name" value="DHquinase_I"/>
    <property type="match status" value="1"/>
</dbReference>
<dbReference type="SUPFAM" id="SSF51569">
    <property type="entry name" value="Aldolase"/>
    <property type="match status" value="1"/>
</dbReference>
<keyword id="KW-0028">Amino-acid biosynthesis</keyword>
<keyword id="KW-0057">Aromatic amino acid biosynthesis</keyword>
<keyword id="KW-0456">Lyase</keyword>
<keyword id="KW-0704">Schiff base</keyword>
<comment type="function">
    <text evidence="1">Involved in the third step of the chorismate pathway, which leads to the biosynthesis of aromatic amino acids. Catalyzes the cis-dehydration of 3-dehydroquinate (DHQ) and introduces the first double bond of the aromatic ring to yield 3-dehydroshikimate.</text>
</comment>
<comment type="catalytic activity">
    <reaction evidence="1">
        <text>3-dehydroquinate = 3-dehydroshikimate + H2O</text>
        <dbReference type="Rhea" id="RHEA:21096"/>
        <dbReference type="ChEBI" id="CHEBI:15377"/>
        <dbReference type="ChEBI" id="CHEBI:16630"/>
        <dbReference type="ChEBI" id="CHEBI:32364"/>
        <dbReference type="EC" id="4.2.1.10"/>
    </reaction>
</comment>
<comment type="pathway">
    <text evidence="1">Metabolic intermediate biosynthesis; chorismate biosynthesis; chorismate from D-erythrose 4-phosphate and phosphoenolpyruvate: step 3/7.</text>
</comment>
<comment type="subunit">
    <text evidence="1">Homodimer.</text>
</comment>
<comment type="similarity">
    <text evidence="1">Belongs to the type-I 3-dehydroquinase family.</text>
</comment>
<evidence type="ECO:0000255" key="1">
    <source>
        <dbReference type="HAMAP-Rule" id="MF_00214"/>
    </source>
</evidence>
<gene>
    <name evidence="1" type="primary">aroD</name>
    <name type="ordered locus">CbuG_2076</name>
</gene>
<proteinExistence type="inferred from homology"/>
<accession>B6J3T7</accession>
<sequence>MLNTPRICVVVIGKTLEEFLSQLEAAQTAVDFVELRIDYLEQINPNWVRIIKNHTHKKAILCCRARADGGKFLGTPEAQQEILQAGNDLGFDYLDIDLPVANKISIHEKKAKIIISYHNFLHTPPITELNFLLENMRLFNPDVFKFATKSEQYEDVKTLFKLLINKKNNENMIVLGMGEQGKIIRLLSPLLGGYLTFSSINGAISAPGQIDFKTMQDFYQRFYKISSPLKGED</sequence>
<protein>
    <recommendedName>
        <fullName evidence="1">3-dehydroquinate dehydratase</fullName>
        <shortName evidence="1">3-dehydroquinase</shortName>
        <ecNumber evidence="1">4.2.1.10</ecNumber>
    </recommendedName>
    <alternativeName>
        <fullName evidence="1">Type I DHQase</fullName>
    </alternativeName>
    <alternativeName>
        <fullName evidence="1">Type I dehydroquinase</fullName>
        <shortName evidence="1">DHQ1</shortName>
    </alternativeName>
</protein>